<proteinExistence type="inferred from homology"/>
<gene>
    <name type="ordered locus">BcerKBAB4_0386</name>
</gene>
<organism>
    <name type="scientific">Bacillus mycoides (strain KBAB4)</name>
    <name type="common">Bacillus weihenstephanensis</name>
    <dbReference type="NCBI Taxonomy" id="315730"/>
    <lineage>
        <taxon>Bacteria</taxon>
        <taxon>Bacillati</taxon>
        <taxon>Bacillota</taxon>
        <taxon>Bacilli</taxon>
        <taxon>Bacillales</taxon>
        <taxon>Bacillaceae</taxon>
        <taxon>Bacillus</taxon>
        <taxon>Bacillus cereus group</taxon>
    </lineage>
</organism>
<reference key="1">
    <citation type="journal article" date="2008" name="Chem. Biol. Interact.">
        <title>Extending the Bacillus cereus group genomics to putative food-borne pathogens of different toxicity.</title>
        <authorList>
            <person name="Lapidus A."/>
            <person name="Goltsman E."/>
            <person name="Auger S."/>
            <person name="Galleron N."/>
            <person name="Segurens B."/>
            <person name="Dossat C."/>
            <person name="Land M.L."/>
            <person name="Broussolle V."/>
            <person name="Brillard J."/>
            <person name="Guinebretiere M.-H."/>
            <person name="Sanchis V."/>
            <person name="Nguen-the C."/>
            <person name="Lereclus D."/>
            <person name="Richardson P."/>
            <person name="Wincker P."/>
            <person name="Weissenbach J."/>
            <person name="Ehrlich S.D."/>
            <person name="Sorokin A."/>
        </authorList>
    </citation>
    <scope>NUCLEOTIDE SEQUENCE [LARGE SCALE GENOMIC DNA]</scope>
    <source>
        <strain>KBAB4</strain>
    </source>
</reference>
<accession>A9VSL6</accession>
<evidence type="ECO:0000255" key="1">
    <source>
        <dbReference type="HAMAP-Rule" id="MF_00829"/>
    </source>
</evidence>
<feature type="chain" id="PRO_1000200911" description="UPF0435 protein BcerKBAB4_0386">
    <location>
        <begin position="1"/>
        <end position="74"/>
    </location>
</feature>
<dbReference type="EMBL" id="CP000903">
    <property type="protein sequence ID" value="ABY41652.1"/>
    <property type="molecule type" value="Genomic_DNA"/>
</dbReference>
<dbReference type="RefSeq" id="WP_002010236.1">
    <property type="nucleotide sequence ID" value="NC_010184.1"/>
</dbReference>
<dbReference type="SMR" id="A9VSL6"/>
<dbReference type="KEGG" id="bwe:BcerKBAB4_0386"/>
<dbReference type="eggNOG" id="COG4840">
    <property type="taxonomic scope" value="Bacteria"/>
</dbReference>
<dbReference type="HOGENOM" id="CLU_199533_1_0_9"/>
<dbReference type="Proteomes" id="UP000002154">
    <property type="component" value="Chromosome"/>
</dbReference>
<dbReference type="HAMAP" id="MF_00829">
    <property type="entry name" value="UPF0435"/>
    <property type="match status" value="1"/>
</dbReference>
<dbReference type="InterPro" id="IPR009507">
    <property type="entry name" value="UPF0435"/>
</dbReference>
<dbReference type="Pfam" id="PF06569">
    <property type="entry name" value="DUF1128"/>
    <property type="match status" value="1"/>
</dbReference>
<protein>
    <recommendedName>
        <fullName evidence="1">UPF0435 protein BcerKBAB4_0386</fullName>
    </recommendedName>
</protein>
<sequence length="74" mass="8594">MDLSVKSEANVEYMVEAIKEKLRMVNAGAMRAASFNEEMYEDLRDIYEHVMKRETFSISEMQAITEELGTLIKK</sequence>
<comment type="similarity">
    <text evidence="1">Belongs to the UPF0435 family.</text>
</comment>
<name>Y386_BACMK</name>